<reference key="1">
    <citation type="journal article" date="2007" name="Proc. Natl. Acad. Sci. U.S.A.">
        <title>Genomic and metabolic adaptations of Methanobrevibacter smithii to the human gut.</title>
        <authorList>
            <person name="Samuel B.S."/>
            <person name="Hansen E.E."/>
            <person name="Manchester J.K."/>
            <person name="Coutinho P.M."/>
            <person name="Henrissat B."/>
            <person name="Fulton R."/>
            <person name="Latreille P."/>
            <person name="Kim K."/>
            <person name="Wilson R.K."/>
            <person name="Gordon J.I."/>
        </authorList>
    </citation>
    <scope>NUCLEOTIDE SEQUENCE [LARGE SCALE GENOMIC DNA]</scope>
    <source>
        <strain>ATCC 35061 / DSM 861 / OCM 144 / PS</strain>
    </source>
</reference>
<gene>
    <name evidence="1" type="primary">rlmE</name>
    <name evidence="1" type="synonym">rrmJ</name>
    <name type="ordered locus">Msm_0508</name>
</gene>
<proteinExistence type="inferred from homology"/>
<keyword id="KW-0963">Cytoplasm</keyword>
<keyword id="KW-0489">Methyltransferase</keyword>
<keyword id="KW-0698">rRNA processing</keyword>
<keyword id="KW-0949">S-adenosyl-L-methionine</keyword>
<keyword id="KW-0808">Transferase</keyword>
<comment type="function">
    <text evidence="1">Specifically methylates the uridine in position 2552 of 23S rRNA at the 2'-O position of the ribose in the fully assembled 50S ribosomal subunit.</text>
</comment>
<comment type="catalytic activity">
    <reaction evidence="1">
        <text>uridine(2552) in 23S rRNA + S-adenosyl-L-methionine = 2'-O-methyluridine(2552) in 23S rRNA + S-adenosyl-L-homocysteine + H(+)</text>
        <dbReference type="Rhea" id="RHEA:42720"/>
        <dbReference type="Rhea" id="RHEA-COMP:10202"/>
        <dbReference type="Rhea" id="RHEA-COMP:10203"/>
        <dbReference type="ChEBI" id="CHEBI:15378"/>
        <dbReference type="ChEBI" id="CHEBI:57856"/>
        <dbReference type="ChEBI" id="CHEBI:59789"/>
        <dbReference type="ChEBI" id="CHEBI:65315"/>
        <dbReference type="ChEBI" id="CHEBI:74478"/>
        <dbReference type="EC" id="2.1.1.166"/>
    </reaction>
</comment>
<comment type="subcellular location">
    <subcellularLocation>
        <location evidence="1">Cytoplasm</location>
    </subcellularLocation>
</comment>
<comment type="similarity">
    <text evidence="1">Belongs to the class I-like SAM-binding methyltransferase superfamily. RNA methyltransferase RlmE family.</text>
</comment>
<sequence length="210" mass="23750">MGSRWQMEKKHDPYYKKAKKEDYRSRASYKIKQLDKKFKLIKEGDTVVDLGAAPGGWSQVALEKVGEEGLVIGVDLNRIKPFPEENFHGIRGDFTTTEVQEKVMNLIGGKAKVVISDASPSLCGIKNIDQLRSIDLTNTVIGIADNILEPKGNLVMKVFQGPEYKDMLTRLKKKYRQVKTTKPPSSRKKSSEMYVVGLDFKPKKNKKSKD</sequence>
<dbReference type="EC" id="2.1.1.166" evidence="1"/>
<dbReference type="EMBL" id="CP000678">
    <property type="protein sequence ID" value="ABQ86713.1"/>
    <property type="molecule type" value="Genomic_DNA"/>
</dbReference>
<dbReference type="RefSeq" id="WP_011953937.1">
    <property type="nucleotide sequence ID" value="NZ_CP117965.1"/>
</dbReference>
<dbReference type="SMR" id="A5UKI5"/>
<dbReference type="STRING" id="420247.Msm_0508"/>
<dbReference type="EnsemblBacteria" id="ABQ86713">
    <property type="protein sequence ID" value="ABQ86713"/>
    <property type="gene ID" value="Msm_0508"/>
</dbReference>
<dbReference type="KEGG" id="msi:Msm_0508"/>
<dbReference type="PATRIC" id="fig|420247.28.peg.507"/>
<dbReference type="eggNOG" id="arCOG00079">
    <property type="taxonomic scope" value="Archaea"/>
</dbReference>
<dbReference type="HOGENOM" id="CLU_009422_4_4_2"/>
<dbReference type="Proteomes" id="UP000001992">
    <property type="component" value="Chromosome"/>
</dbReference>
<dbReference type="GO" id="GO:0005737">
    <property type="term" value="C:cytoplasm"/>
    <property type="evidence" value="ECO:0007669"/>
    <property type="project" value="UniProtKB-SubCell"/>
</dbReference>
<dbReference type="GO" id="GO:0008650">
    <property type="term" value="F:rRNA (uridine-2'-O-)-methyltransferase activity"/>
    <property type="evidence" value="ECO:0007669"/>
    <property type="project" value="UniProtKB-UniRule"/>
</dbReference>
<dbReference type="Gene3D" id="3.40.50.150">
    <property type="entry name" value="Vaccinia Virus protein VP39"/>
    <property type="match status" value="1"/>
</dbReference>
<dbReference type="HAMAP" id="MF_01547">
    <property type="entry name" value="RNA_methyltr_E"/>
    <property type="match status" value="1"/>
</dbReference>
<dbReference type="InterPro" id="IPR050082">
    <property type="entry name" value="RNA_methyltr_RlmE"/>
</dbReference>
<dbReference type="InterPro" id="IPR002877">
    <property type="entry name" value="RNA_MeTrfase_FtsJ_dom"/>
</dbReference>
<dbReference type="InterPro" id="IPR015507">
    <property type="entry name" value="rRNA-MeTfrase_E"/>
</dbReference>
<dbReference type="InterPro" id="IPR029063">
    <property type="entry name" value="SAM-dependent_MTases_sf"/>
</dbReference>
<dbReference type="PANTHER" id="PTHR10920:SF13">
    <property type="entry name" value="PRE-RRNA 2'-O-RIBOSE RNA METHYLTRANSFERASE FTSJ3"/>
    <property type="match status" value="1"/>
</dbReference>
<dbReference type="PANTHER" id="PTHR10920">
    <property type="entry name" value="RIBOSOMAL RNA METHYLTRANSFERASE"/>
    <property type="match status" value="1"/>
</dbReference>
<dbReference type="Pfam" id="PF01728">
    <property type="entry name" value="FtsJ"/>
    <property type="match status" value="1"/>
</dbReference>
<dbReference type="PIRSF" id="PIRSF005461">
    <property type="entry name" value="23S_rRNA_mtase"/>
    <property type="match status" value="1"/>
</dbReference>
<dbReference type="SUPFAM" id="SSF53335">
    <property type="entry name" value="S-adenosyl-L-methionine-dependent methyltransferases"/>
    <property type="match status" value="1"/>
</dbReference>
<name>RLME_METS3</name>
<evidence type="ECO:0000255" key="1">
    <source>
        <dbReference type="HAMAP-Rule" id="MF_01547"/>
    </source>
</evidence>
<evidence type="ECO:0000256" key="2">
    <source>
        <dbReference type="SAM" id="MobiDB-lite"/>
    </source>
</evidence>
<accession>A5UKI5</accession>
<organism>
    <name type="scientific">Methanobrevibacter smithii (strain ATCC 35061 / DSM 861 / OCM 144 / PS)</name>
    <dbReference type="NCBI Taxonomy" id="420247"/>
    <lineage>
        <taxon>Archaea</taxon>
        <taxon>Methanobacteriati</taxon>
        <taxon>Methanobacteriota</taxon>
        <taxon>Methanomada group</taxon>
        <taxon>Methanobacteria</taxon>
        <taxon>Methanobacteriales</taxon>
        <taxon>Methanobacteriaceae</taxon>
        <taxon>Methanobrevibacter</taxon>
    </lineage>
</organism>
<feature type="chain" id="PRO_0000300603" description="Ribosomal RNA large subunit methyltransferase E">
    <location>
        <begin position="1"/>
        <end position="210"/>
    </location>
</feature>
<feature type="region of interest" description="Disordered" evidence="2">
    <location>
        <begin position="175"/>
        <end position="210"/>
    </location>
</feature>
<feature type="active site" description="Proton acceptor" evidence="1">
    <location>
        <position position="157"/>
    </location>
</feature>
<feature type="binding site" evidence="1">
    <location>
        <position position="55"/>
    </location>
    <ligand>
        <name>S-adenosyl-L-methionine</name>
        <dbReference type="ChEBI" id="CHEBI:59789"/>
    </ligand>
</feature>
<feature type="binding site" evidence="1">
    <location>
        <position position="57"/>
    </location>
    <ligand>
        <name>S-adenosyl-L-methionine</name>
        <dbReference type="ChEBI" id="CHEBI:59789"/>
    </ligand>
</feature>
<feature type="binding site" evidence="1">
    <location>
        <position position="75"/>
    </location>
    <ligand>
        <name>S-adenosyl-L-methionine</name>
        <dbReference type="ChEBI" id="CHEBI:59789"/>
    </ligand>
</feature>
<feature type="binding site" evidence="1">
    <location>
        <position position="93"/>
    </location>
    <ligand>
        <name>S-adenosyl-L-methionine</name>
        <dbReference type="ChEBI" id="CHEBI:59789"/>
    </ligand>
</feature>
<feature type="binding site" evidence="1">
    <location>
        <position position="117"/>
    </location>
    <ligand>
        <name>S-adenosyl-L-methionine</name>
        <dbReference type="ChEBI" id="CHEBI:59789"/>
    </ligand>
</feature>
<protein>
    <recommendedName>
        <fullName evidence="1">Ribosomal RNA large subunit methyltransferase E</fullName>
        <ecNumber evidence="1">2.1.1.166</ecNumber>
    </recommendedName>
    <alternativeName>
        <fullName evidence="1">23S rRNA Um2552 methyltransferase</fullName>
    </alternativeName>
    <alternativeName>
        <fullName evidence="1">rRNA (uridine-2'-O-)-methyltransferase</fullName>
    </alternativeName>
</protein>